<reference key="1">
    <citation type="journal article" date="2005" name="Infect. Immun.">
        <title>Whole-genome analyses of speciation events in pathogenic Brucellae.</title>
        <authorList>
            <person name="Chain P.S."/>
            <person name="Comerci D.J."/>
            <person name="Tolmasky M.E."/>
            <person name="Larimer F.W."/>
            <person name="Malfatti S.A."/>
            <person name="Vergez L.M."/>
            <person name="Aguero F."/>
            <person name="Land M.L."/>
            <person name="Ugalde R.A."/>
            <person name="Garcia E."/>
        </authorList>
    </citation>
    <scope>NUCLEOTIDE SEQUENCE [LARGE SCALE GENOMIC DNA]</scope>
    <source>
        <strain>2308</strain>
    </source>
</reference>
<sequence>MAANSKTAIRLSLRAGERIFINGAVLRADRKVSLELLNDATFLLENHVLQPEDTTTPLRQLYFAAQMMLIEPAMREQAGATFAQMLKGMFAMFKDAEILNALKLVDELVHNGRVFEALKTIRAQYPREAELMGAQPVVWPVTKSGKSAGANP</sequence>
<evidence type="ECO:0000255" key="1">
    <source>
        <dbReference type="HAMAP-Rule" id="MF_00783"/>
    </source>
</evidence>
<proteinExistence type="inferred from homology"/>
<keyword id="KW-1005">Bacterial flagellum biogenesis</keyword>
<keyword id="KW-1185">Reference proteome</keyword>
<keyword id="KW-0678">Repressor</keyword>
<keyword id="KW-0694">RNA-binding</keyword>
<feature type="chain" id="PRO_1000046828" description="Probable flagellum biosynthesis repressor protein FlbT">
    <location>
        <begin position="1"/>
        <end position="152"/>
    </location>
</feature>
<gene>
    <name evidence="1" type="primary">flbT</name>
    <name type="ordered locus">BAB2_1094</name>
</gene>
<name>FLBT_BRUA2</name>
<organism>
    <name type="scientific">Brucella abortus (strain 2308)</name>
    <dbReference type="NCBI Taxonomy" id="359391"/>
    <lineage>
        <taxon>Bacteria</taxon>
        <taxon>Pseudomonadati</taxon>
        <taxon>Pseudomonadota</taxon>
        <taxon>Alphaproteobacteria</taxon>
        <taxon>Hyphomicrobiales</taxon>
        <taxon>Brucellaceae</taxon>
        <taxon>Brucella/Ochrobactrum group</taxon>
        <taxon>Brucella</taxon>
    </lineage>
</organism>
<dbReference type="EMBL" id="AM040265">
    <property type="protein sequence ID" value="CAJ13260.1"/>
    <property type="molecule type" value="Genomic_DNA"/>
</dbReference>
<dbReference type="RefSeq" id="WP_002966648.1">
    <property type="nucleotide sequence ID" value="NZ_KN046823.1"/>
</dbReference>
<dbReference type="STRING" id="359391.BAB2_1094"/>
<dbReference type="GeneID" id="93016074"/>
<dbReference type="KEGG" id="bmf:BAB2_1094"/>
<dbReference type="PATRIC" id="fig|359391.11.peg.1878"/>
<dbReference type="HOGENOM" id="CLU_130913_1_0_5"/>
<dbReference type="PhylomeDB" id="Q2YJG3"/>
<dbReference type="Proteomes" id="UP000002719">
    <property type="component" value="Chromosome II"/>
</dbReference>
<dbReference type="GO" id="GO:0048027">
    <property type="term" value="F:mRNA 5'-UTR binding"/>
    <property type="evidence" value="ECO:0007669"/>
    <property type="project" value="UniProtKB-UniRule"/>
</dbReference>
<dbReference type="GO" id="GO:0044781">
    <property type="term" value="P:bacterial-type flagellum organization"/>
    <property type="evidence" value="ECO:0007669"/>
    <property type="project" value="UniProtKB-KW"/>
</dbReference>
<dbReference type="GO" id="GO:0006402">
    <property type="term" value="P:mRNA catabolic process"/>
    <property type="evidence" value="ECO:0007669"/>
    <property type="project" value="InterPro"/>
</dbReference>
<dbReference type="GO" id="GO:1902209">
    <property type="term" value="P:negative regulation of bacterial-type flagellum assembly"/>
    <property type="evidence" value="ECO:0007669"/>
    <property type="project" value="UniProtKB-UniRule"/>
</dbReference>
<dbReference type="HAMAP" id="MF_00783">
    <property type="entry name" value="FlbT"/>
    <property type="match status" value="1"/>
</dbReference>
<dbReference type="InterPro" id="IPR009967">
    <property type="entry name" value="Flagellum_FlbT"/>
</dbReference>
<dbReference type="NCBIfam" id="NF001995">
    <property type="entry name" value="PRK00794.1-1"/>
    <property type="match status" value="1"/>
</dbReference>
<dbReference type="Pfam" id="PF07378">
    <property type="entry name" value="FlbT"/>
    <property type="match status" value="1"/>
</dbReference>
<dbReference type="PIRSF" id="PIRSF009533">
    <property type="entry name" value="FlbT"/>
    <property type="match status" value="1"/>
</dbReference>
<accession>Q2YJG3</accession>
<protein>
    <recommendedName>
        <fullName evidence="1">Probable flagellum biosynthesis repressor protein FlbT</fullName>
    </recommendedName>
</protein>
<comment type="function">
    <text evidence="1">Has a post-transcriptional repressor function in flagellum biogenesis. Associates with the 5'-UTR of fljK mRNA and promotes its degradation.</text>
</comment>
<comment type="similarity">
    <text evidence="1">Belongs to the FlbT family.</text>
</comment>